<dbReference type="EC" id="2.3.3.8"/>
<dbReference type="EMBL" id="AC116367">
    <property type="protein sequence ID" value="AAX96579.1"/>
    <property type="status" value="ALT_SEQ"/>
    <property type="molecule type" value="Genomic_DNA"/>
</dbReference>
<dbReference type="EMBL" id="AC146937">
    <property type="protein sequence ID" value="AAX95006.1"/>
    <property type="status" value="ALT_SEQ"/>
    <property type="molecule type" value="Genomic_DNA"/>
</dbReference>
<dbReference type="EMBL" id="DP000010">
    <property type="protein sequence ID" value="ABA95455.1"/>
    <property type="status" value="ALT_SEQ"/>
    <property type="molecule type" value="Genomic_DNA"/>
</dbReference>
<dbReference type="EMBL" id="AP008217">
    <property type="protein sequence ID" value="BAH95456.1"/>
    <property type="status" value="ALT_SEQ"/>
    <property type="molecule type" value="Genomic_DNA"/>
</dbReference>
<dbReference type="EMBL" id="AP014967">
    <property type="status" value="NOT_ANNOTATED_CDS"/>
    <property type="molecule type" value="Genomic_DNA"/>
</dbReference>
<dbReference type="EMBL" id="CM000148">
    <property type="protein sequence ID" value="EAZ19281.1"/>
    <property type="status" value="ALT_SEQ"/>
    <property type="molecule type" value="Genomic_DNA"/>
</dbReference>
<dbReference type="SMR" id="Q53JY8"/>
<dbReference type="FunCoup" id="Q53JY8">
    <property type="interactions" value="160"/>
</dbReference>
<dbReference type="STRING" id="39947.Q53JY8"/>
<dbReference type="PaxDb" id="39947-Q53JY8"/>
<dbReference type="KEGG" id="dosa:Os11g0693800"/>
<dbReference type="InParanoid" id="Q53JY8"/>
<dbReference type="Proteomes" id="UP000000763">
    <property type="component" value="Chromosome 11"/>
</dbReference>
<dbReference type="Proteomes" id="UP000007752">
    <property type="component" value="Chromosome 11"/>
</dbReference>
<dbReference type="Proteomes" id="UP000059680">
    <property type="component" value="Chromosome 11"/>
</dbReference>
<dbReference type="GO" id="GO:0005829">
    <property type="term" value="C:cytosol"/>
    <property type="evidence" value="ECO:0007669"/>
    <property type="project" value="UniProtKB-SubCell"/>
</dbReference>
<dbReference type="GO" id="GO:0005524">
    <property type="term" value="F:ATP binding"/>
    <property type="evidence" value="ECO:0007669"/>
    <property type="project" value="UniProtKB-KW"/>
</dbReference>
<dbReference type="GO" id="GO:0003878">
    <property type="term" value="F:ATP citrate synthase activity"/>
    <property type="evidence" value="ECO:0007669"/>
    <property type="project" value="UniProtKB-EC"/>
</dbReference>
<dbReference type="GO" id="GO:0006629">
    <property type="term" value="P:lipid metabolic process"/>
    <property type="evidence" value="ECO:0007669"/>
    <property type="project" value="UniProtKB-KW"/>
</dbReference>
<dbReference type="FunFam" id="3.30.470.110:FF:000002">
    <property type="entry name" value="ATP-citrate synthase alpha chain protein"/>
    <property type="match status" value="1"/>
</dbReference>
<dbReference type="FunFam" id="3.40.50.261:FF:000008">
    <property type="entry name" value="ATP-citrate synthase alpha chain protein"/>
    <property type="match status" value="1"/>
</dbReference>
<dbReference type="Gene3D" id="3.30.470.110">
    <property type="match status" value="1"/>
</dbReference>
<dbReference type="Gene3D" id="3.40.50.261">
    <property type="entry name" value="Succinyl-CoA synthetase domains"/>
    <property type="match status" value="2"/>
</dbReference>
<dbReference type="InterPro" id="IPR032263">
    <property type="entry name" value="Citrate-bd"/>
</dbReference>
<dbReference type="InterPro" id="IPR056749">
    <property type="entry name" value="Citrate_synth_N"/>
</dbReference>
<dbReference type="InterPro" id="IPR016102">
    <property type="entry name" value="Succinyl-CoA_synth-like"/>
</dbReference>
<dbReference type="PANTHER" id="PTHR11815:SF10">
    <property type="entry name" value="SUCCINATE--COA LIGASE [GDP-FORMING] SUBUNIT BETA, MITOCHONDRIAL"/>
    <property type="match status" value="1"/>
</dbReference>
<dbReference type="PANTHER" id="PTHR11815">
    <property type="entry name" value="SUCCINYL-COA SYNTHETASE BETA CHAIN"/>
    <property type="match status" value="1"/>
</dbReference>
<dbReference type="Pfam" id="PF16114">
    <property type="entry name" value="Citrate_bind"/>
    <property type="match status" value="1"/>
</dbReference>
<dbReference type="Pfam" id="PF24948">
    <property type="entry name" value="Citrate_synth_N"/>
    <property type="match status" value="1"/>
</dbReference>
<dbReference type="SUPFAM" id="SSF56059">
    <property type="entry name" value="Glutathione synthetase ATP-binding domain-like"/>
    <property type="match status" value="1"/>
</dbReference>
<dbReference type="SUPFAM" id="SSF52210">
    <property type="entry name" value="Succinyl-CoA synthetase domains"/>
    <property type="match status" value="1"/>
</dbReference>
<name>ACLA1_ORYSJ</name>
<gene>
    <name type="primary">ACLA-1</name>
    <name type="ordered locus">Os11g0693800</name>
    <name type="ordered locus">LOC_Os11g47120</name>
    <name type="ORF">OsJ_34825</name>
</gene>
<comment type="function">
    <text evidence="1">ATP citrate-lyase is the primary enzyme responsible for the synthesis of cytosolic acetyl-CoA, used for the elongation of fatty acids and biosynthesis of isoprenoids, flavonoids and malonated derivatives. May supply substrate to the cytosolic acetyl-CoA carboxylase, which generates the malonyl-CoA used for the synthesis of a multitude of compounds, including very long chain fatty acids and flavonoids. In contrast to all known animal ACL enzymes having a homomeric structure, plant ACLs are composed of alpha and beta chains (By similarity).</text>
</comment>
<comment type="catalytic activity">
    <reaction>
        <text>oxaloacetate + acetyl-CoA + ADP + phosphate = citrate + ATP + CoA</text>
        <dbReference type="Rhea" id="RHEA:21160"/>
        <dbReference type="ChEBI" id="CHEBI:16452"/>
        <dbReference type="ChEBI" id="CHEBI:16947"/>
        <dbReference type="ChEBI" id="CHEBI:30616"/>
        <dbReference type="ChEBI" id="CHEBI:43474"/>
        <dbReference type="ChEBI" id="CHEBI:57287"/>
        <dbReference type="ChEBI" id="CHEBI:57288"/>
        <dbReference type="ChEBI" id="CHEBI:456216"/>
        <dbReference type="EC" id="2.3.3.8"/>
    </reaction>
</comment>
<comment type="subunit">
    <text evidence="1">Heterooctamer of 4 alpha and 4 beta chains.</text>
</comment>
<comment type="subcellular location">
    <subcellularLocation>
        <location evidence="1">Cytoplasm</location>
        <location evidence="1">Cytosol</location>
    </subcellularLocation>
</comment>
<comment type="similarity">
    <text evidence="2">Belongs to the succinate/malate CoA ligase beta subunit family.</text>
</comment>
<comment type="sequence caution" evidence="2">
    <conflict type="erroneous gene model prediction">
        <sequence resource="EMBL-CDS" id="AAX95006"/>
    </conflict>
</comment>
<comment type="sequence caution" evidence="2">
    <conflict type="erroneous gene model prediction">
        <sequence resource="EMBL-CDS" id="AAX96579"/>
    </conflict>
</comment>
<comment type="sequence caution" evidence="2">
    <conflict type="erroneous gene model prediction">
        <sequence resource="EMBL-CDS" id="ABA95455"/>
    </conflict>
</comment>
<comment type="sequence caution" evidence="2">
    <conflict type="erroneous gene model prediction">
        <sequence resource="EMBL-CDS" id="BAH95456"/>
    </conflict>
</comment>
<comment type="sequence caution" evidence="2">
    <conflict type="erroneous gene model prediction">
        <sequence resource="EMBL-CDS" id="EAZ19281"/>
    </conflict>
</comment>
<accession>Q53JY8</accession>
<accession>C7J931</accession>
<accession>Q53QC5</accession>
<feature type="chain" id="PRO_0000412218" description="ATP-citrate synthase subunit alpha chain protein 1">
    <location>
        <begin position="1"/>
        <end position="407"/>
    </location>
</feature>
<feature type="binding site" evidence="1">
    <location>
        <position position="327"/>
    </location>
    <ligand>
        <name>citrate</name>
        <dbReference type="ChEBI" id="CHEBI:16947"/>
    </ligand>
</feature>
<feature type="binding site" evidence="1">
    <location>
        <position position="329"/>
    </location>
    <ligand>
        <name>citrate</name>
        <dbReference type="ChEBI" id="CHEBI:16947"/>
    </ligand>
</feature>
<feature type="binding site" evidence="1">
    <location>
        <position position="360"/>
    </location>
    <ligand>
        <name>citrate</name>
        <dbReference type="ChEBI" id="CHEBI:16947"/>
    </ligand>
</feature>
<reference key="1">
    <citation type="journal article" date="2005" name="BMC Biol.">
        <title>The sequence of rice chromosomes 11 and 12, rich in disease resistance genes and recent gene duplications.</title>
        <authorList>
            <consortium name="The rice chromosomes 11 and 12 sequencing consortia"/>
        </authorList>
    </citation>
    <scope>NUCLEOTIDE SEQUENCE [LARGE SCALE GENOMIC DNA]</scope>
    <source>
        <strain>cv. Nipponbare</strain>
    </source>
</reference>
<reference key="2">
    <citation type="journal article" date="2005" name="Nature">
        <title>The map-based sequence of the rice genome.</title>
        <authorList>
            <consortium name="International rice genome sequencing project (IRGSP)"/>
        </authorList>
    </citation>
    <scope>NUCLEOTIDE SEQUENCE [LARGE SCALE GENOMIC DNA]</scope>
    <source>
        <strain>cv. Nipponbare</strain>
    </source>
</reference>
<reference key="3">
    <citation type="journal article" date="2008" name="Nucleic Acids Res.">
        <title>The rice annotation project database (RAP-DB): 2008 update.</title>
        <authorList>
            <consortium name="The rice annotation project (RAP)"/>
        </authorList>
    </citation>
    <scope>GENOME REANNOTATION</scope>
    <source>
        <strain>cv. Nipponbare</strain>
    </source>
</reference>
<reference key="4">
    <citation type="journal article" date="2013" name="Rice">
        <title>Improvement of the Oryza sativa Nipponbare reference genome using next generation sequence and optical map data.</title>
        <authorList>
            <person name="Kawahara Y."/>
            <person name="de la Bastide M."/>
            <person name="Hamilton J.P."/>
            <person name="Kanamori H."/>
            <person name="McCombie W.R."/>
            <person name="Ouyang S."/>
            <person name="Schwartz D.C."/>
            <person name="Tanaka T."/>
            <person name="Wu J."/>
            <person name="Zhou S."/>
            <person name="Childs K.L."/>
            <person name="Davidson R.M."/>
            <person name="Lin H."/>
            <person name="Quesada-Ocampo L."/>
            <person name="Vaillancourt B."/>
            <person name="Sakai H."/>
            <person name="Lee S.S."/>
            <person name="Kim J."/>
            <person name="Numa H."/>
            <person name="Itoh T."/>
            <person name="Buell C.R."/>
            <person name="Matsumoto T."/>
        </authorList>
    </citation>
    <scope>GENOME REANNOTATION</scope>
    <source>
        <strain>cv. Nipponbare</strain>
    </source>
</reference>
<reference key="5">
    <citation type="journal article" date="2005" name="PLoS Biol.">
        <title>The genomes of Oryza sativa: a history of duplications.</title>
        <authorList>
            <person name="Yu J."/>
            <person name="Wang J."/>
            <person name="Lin W."/>
            <person name="Li S."/>
            <person name="Li H."/>
            <person name="Zhou J."/>
            <person name="Ni P."/>
            <person name="Dong W."/>
            <person name="Hu S."/>
            <person name="Zeng C."/>
            <person name="Zhang J."/>
            <person name="Zhang Y."/>
            <person name="Li R."/>
            <person name="Xu Z."/>
            <person name="Li S."/>
            <person name="Li X."/>
            <person name="Zheng H."/>
            <person name="Cong L."/>
            <person name="Lin L."/>
            <person name="Yin J."/>
            <person name="Geng J."/>
            <person name="Li G."/>
            <person name="Shi J."/>
            <person name="Liu J."/>
            <person name="Lv H."/>
            <person name="Li J."/>
            <person name="Wang J."/>
            <person name="Deng Y."/>
            <person name="Ran L."/>
            <person name="Shi X."/>
            <person name="Wang X."/>
            <person name="Wu Q."/>
            <person name="Li C."/>
            <person name="Ren X."/>
            <person name="Wang J."/>
            <person name="Wang X."/>
            <person name="Li D."/>
            <person name="Liu D."/>
            <person name="Zhang X."/>
            <person name="Ji Z."/>
            <person name="Zhao W."/>
            <person name="Sun Y."/>
            <person name="Zhang Z."/>
            <person name="Bao J."/>
            <person name="Han Y."/>
            <person name="Dong L."/>
            <person name="Ji J."/>
            <person name="Chen P."/>
            <person name="Wu S."/>
            <person name="Liu J."/>
            <person name="Xiao Y."/>
            <person name="Bu D."/>
            <person name="Tan J."/>
            <person name="Yang L."/>
            <person name="Ye C."/>
            <person name="Zhang J."/>
            <person name="Xu J."/>
            <person name="Zhou Y."/>
            <person name="Yu Y."/>
            <person name="Zhang B."/>
            <person name="Zhuang S."/>
            <person name="Wei H."/>
            <person name="Liu B."/>
            <person name="Lei M."/>
            <person name="Yu H."/>
            <person name="Li Y."/>
            <person name="Xu H."/>
            <person name="Wei S."/>
            <person name="He X."/>
            <person name="Fang L."/>
            <person name="Zhang Z."/>
            <person name="Zhang Y."/>
            <person name="Huang X."/>
            <person name="Su Z."/>
            <person name="Tong W."/>
            <person name="Li J."/>
            <person name="Tong Z."/>
            <person name="Li S."/>
            <person name="Ye J."/>
            <person name="Wang L."/>
            <person name="Fang L."/>
            <person name="Lei T."/>
            <person name="Chen C.-S."/>
            <person name="Chen H.-C."/>
            <person name="Xu Z."/>
            <person name="Li H."/>
            <person name="Huang H."/>
            <person name="Zhang F."/>
            <person name="Xu H."/>
            <person name="Li N."/>
            <person name="Zhao C."/>
            <person name="Li S."/>
            <person name="Dong L."/>
            <person name="Huang Y."/>
            <person name="Li L."/>
            <person name="Xi Y."/>
            <person name="Qi Q."/>
            <person name="Li W."/>
            <person name="Zhang B."/>
            <person name="Hu W."/>
            <person name="Zhang Y."/>
            <person name="Tian X."/>
            <person name="Jiao Y."/>
            <person name="Liang X."/>
            <person name="Jin J."/>
            <person name="Gao L."/>
            <person name="Zheng W."/>
            <person name="Hao B."/>
            <person name="Liu S.-M."/>
            <person name="Wang W."/>
            <person name="Yuan L."/>
            <person name="Cao M."/>
            <person name="McDermott J."/>
            <person name="Samudrala R."/>
            <person name="Wang J."/>
            <person name="Wong G.K.-S."/>
            <person name="Yang H."/>
        </authorList>
    </citation>
    <scope>NUCLEOTIDE SEQUENCE [LARGE SCALE GENOMIC DNA]</scope>
    <source>
        <strain>cv. Nipponbare</strain>
    </source>
</reference>
<proteinExistence type="inferred from homology"/>
<organism>
    <name type="scientific">Oryza sativa subsp. japonica</name>
    <name type="common">Rice</name>
    <dbReference type="NCBI Taxonomy" id="39947"/>
    <lineage>
        <taxon>Eukaryota</taxon>
        <taxon>Viridiplantae</taxon>
        <taxon>Streptophyta</taxon>
        <taxon>Embryophyta</taxon>
        <taxon>Tracheophyta</taxon>
        <taxon>Spermatophyta</taxon>
        <taxon>Magnoliopsida</taxon>
        <taxon>Liliopsida</taxon>
        <taxon>Poales</taxon>
        <taxon>Poaceae</taxon>
        <taxon>BOP clade</taxon>
        <taxon>Oryzoideae</taxon>
        <taxon>Oryzeae</taxon>
        <taxon>Oryzinae</taxon>
        <taxon>Oryza</taxon>
        <taxon>Oryza sativa</taxon>
    </lineage>
</organism>
<sequence length="407" mass="45005">MARKKIREYDSKRLLKEHLKRLAGIDLQILSAQVTQSTDFTELVNQQPWLSTMKLVVKPDMLFGKRGKSGLVALNLDIAQVKEFVKERLGVEVEMGGCKAPITTFIVEPFVPHDQEYYLSIVSERLGSTISFSECGGIEIEENWDKVKTIFLSTEKPMTPDACAPLIATLPLEARGKIGDFIKGVFAVFQDLDFSFLEMNPFTIVNGEPYPLDMRGELDDTAAFKTSRSKWGNIEFPLPFGRVLSSTEGFIHDLDEKTSASLKFTVLNPKGRIWTMVAGGELENYAEYSGAPNEEEVLQYARVVLDCATADPDGRKRALLIGGGIANFTDVGATFSGIIRALREKESKLKAARMHIYVRRGGPNYQTGLAKMRKLGAELGVPIEVYGPEATMTGICKQAIECVMAAA</sequence>
<protein>
    <recommendedName>
        <fullName>ATP-citrate synthase subunit alpha chain protein 1</fullName>
        <shortName>ATP-citrate synthase A-1</shortName>
        <ecNumber>2.3.3.8</ecNumber>
    </recommendedName>
    <alternativeName>
        <fullName>ATP-citrate lyase A-1</fullName>
    </alternativeName>
    <alternativeName>
        <fullName>Citrate cleavage enzyme A-1</fullName>
    </alternativeName>
</protein>
<keyword id="KW-0012">Acyltransferase</keyword>
<keyword id="KW-0067">ATP-binding</keyword>
<keyword id="KW-0963">Cytoplasm</keyword>
<keyword id="KW-0444">Lipid biosynthesis</keyword>
<keyword id="KW-0443">Lipid metabolism</keyword>
<keyword id="KW-0547">Nucleotide-binding</keyword>
<keyword id="KW-1185">Reference proteome</keyword>
<keyword id="KW-0808">Transferase</keyword>
<evidence type="ECO:0000250" key="1"/>
<evidence type="ECO:0000305" key="2"/>